<organismHost>
    <name type="scientific">Homo sapiens</name>
    <name type="common">Human</name>
    <dbReference type="NCBI Taxonomy" id="9606"/>
</organismHost>
<keyword id="KW-0244">Early protein</keyword>
<keyword id="KW-1032">Host cell membrane</keyword>
<keyword id="KW-1038">Host endoplasmic reticulum</keyword>
<keyword id="KW-1043">Host membrane</keyword>
<keyword id="KW-0945">Host-virus interaction</keyword>
<keyword id="KW-1090">Inhibition of host innate immune response by virus</keyword>
<keyword id="KW-1091">Inhibition of host interferon receptors by virus</keyword>
<keyword id="KW-1114">Inhibition of host interferon signaling pathway by virus</keyword>
<keyword id="KW-0922">Interferon antiviral system evasion</keyword>
<keyword id="KW-0472">Membrane</keyword>
<keyword id="KW-0479">Metal-binding</keyword>
<keyword id="KW-1185">Reference proteome</keyword>
<keyword id="KW-0808">Transferase</keyword>
<keyword id="KW-0812">Transmembrane</keyword>
<keyword id="KW-1133">Transmembrane helix</keyword>
<keyword id="KW-0833">Ubl conjugation pathway</keyword>
<keyword id="KW-0899">Viral immunoevasion</keyword>
<keyword id="KW-0862">Zinc</keyword>
<keyword id="KW-0863">Zinc-finger</keyword>
<reference key="1">
    <citation type="journal article" date="1997" name="J. Virol.">
        <title>A single 13-kilobase divergent locus in the Kaposi sarcoma-associated herpesvirus (human herpesvirus 8) genome contains nine open reading frames that are homologous to or related to cellular proteins.</title>
        <authorList>
            <person name="Nicholas J."/>
            <person name="Ruvolo V."/>
            <person name="Zong J."/>
            <person name="Ciufo D."/>
            <person name="Guo H.-G."/>
            <person name="Reitz M.S."/>
            <person name="Hayward G.S."/>
        </authorList>
    </citation>
    <scope>NUCLEOTIDE SEQUENCE [GENOMIC DNA]</scope>
</reference>
<reference key="2">
    <citation type="journal article" date="1996" name="Proc. Natl. Acad. Sci. U.S.A.">
        <title>Nucleotide sequence of the Kaposi sarcoma-associated herpesvirus (HHV8).</title>
        <authorList>
            <person name="Russo J.J."/>
            <person name="Bohenzky R.A."/>
            <person name="Chien M.-C."/>
            <person name="Chen J."/>
            <person name="Yan M."/>
            <person name="Maddalena D."/>
            <person name="Parry J.P."/>
            <person name="Peruzzi D."/>
            <person name="Edelman I.S."/>
            <person name="Chang Y."/>
            <person name="Moore P.S."/>
        </authorList>
    </citation>
    <scope>NUCLEOTIDE SEQUENCE [LARGE SCALE GENOMIC DNA]</scope>
</reference>
<reference key="3">
    <citation type="submission" date="2001-07" db="EMBL/GenBank/DDBJ databases">
        <title>The genome of human herpesvirus 8 cloned from Kaposi's sarcoma.</title>
        <authorList>
            <person name="Neipel F."/>
            <person name="Albrecht J.-C."/>
            <person name="Ensser A."/>
            <person name="Huang Y.-Q."/>
            <person name="Li J.J."/>
            <person name="Friedman-Kien A.E."/>
            <person name="Fleckenstein B."/>
        </authorList>
    </citation>
    <scope>NUCLEOTIDE SEQUENCE [LARGE SCALE GENOMIC DNA]</scope>
</reference>
<reference key="4">
    <citation type="journal article" date="2000" name="J. Virol.">
        <title>Identification and analysis of the K5 gene of Kaposi's sarcoma-associated herpesvirus.</title>
        <authorList>
            <person name="Haque M."/>
            <person name="Chen J."/>
            <person name="Ueda K."/>
            <person name="Mori Y."/>
            <person name="Nakano K."/>
            <person name="Hirata Y."/>
            <person name="Kanamori S."/>
            <person name="Uchiyama Y."/>
            <person name="Inagi R."/>
            <person name="Okuno T."/>
            <person name="Yamanishi K."/>
        </authorList>
    </citation>
    <scope>NUCLEOTIDE SEQUENCE [MRNA]</scope>
    <scope>SUBCELLULAR LOCATION</scope>
</reference>
<reference key="5">
    <citation type="journal article" date="2006" name="J. Gen. Virol.">
        <title>Kaposi's sarcoma-associated herpesvirus immune modulation: an overview.</title>
        <authorList>
            <person name="Rezaee S.A.R."/>
            <person name="Cunningham C."/>
            <person name="Davison A.J."/>
            <person name="Blackbourn D.J."/>
        </authorList>
    </citation>
    <scope>NUCLEOTIDE SEQUENCE [LARGE SCALE GENOMIC DNA]</scope>
</reference>
<reference key="6">
    <citation type="journal article" date="2000" name="J. Virol.">
        <title>Downregulation of major histocompatibility complex class I molecules by Kaposi's sarcoma-associated herpesvirus K3 and K5 proteins.</title>
        <authorList>
            <person name="Ishido S."/>
            <person name="Wang C."/>
            <person name="Lee B.-S."/>
            <person name="Cohen G.B."/>
            <person name="Jung J.U."/>
        </authorList>
    </citation>
    <scope>FUNCTION</scope>
    <scope>DOMAIN RINGV-TYPE ZINC-FINGER</scope>
    <scope>MUTAGENESIS OF CYS-15; CYS-56 AND CYS-59</scope>
</reference>
<reference key="7">
    <citation type="journal article" date="2000" name="Proc. Natl. Acad. Sci. U.S.A.">
        <title>Kaposi's sarcoma-associated herpesvirus encodes two proteins that block cell surface display of MHC class I chains by enhancing their endocytosis.</title>
        <authorList>
            <person name="Coscoy L."/>
            <person name="Ganem D."/>
        </authorList>
    </citation>
    <scope>FUNCTION</scope>
</reference>
<reference key="8">
    <citation type="journal article" date="2001" name="J. Cell Biol.">
        <title>A novel class of herpesvirus-encoded membrane-bound E3 ubiquitin ligases regulates endocytosis of proteins involved in immune recognition.</title>
        <authorList>
            <person name="Coscoy L."/>
            <person name="Sanchez D.J."/>
            <person name="Ganem D."/>
        </authorList>
    </citation>
    <scope>FUNCTION</scope>
</reference>
<reference key="9">
    <citation type="journal article" date="2001" name="J. Clin. Invest.">
        <title>A viral protein that selectively downregulates ICAM-1 and B7-2 and modulates T cell costimulation.</title>
        <authorList>
            <person name="Coscoy L."/>
            <person name="Ganem D."/>
        </authorList>
    </citation>
    <scope>FUNCTION</scope>
</reference>
<reference key="10">
    <citation type="journal article" date="2002" name="J. Biol. Chem.">
        <title>Functional organization of MIR2, a novel viral regulator of selective endocytosis.</title>
        <authorList>
            <person name="Sanchez D.J."/>
            <person name="Coscoy L."/>
            <person name="Ganem D."/>
        </authorList>
    </citation>
    <scope>FUNCTION</scope>
</reference>
<reference key="11">
    <citation type="journal article" date="2008" name="Proc. Natl. Acad. Sci. U.S.A.">
        <title>Down-regulation of NKG2D and NKp80 ligands by Kaposi's sarcoma-associated herpesvirus K5 protects against NK cell cytotoxicity.</title>
        <authorList>
            <person name="Thomas M."/>
            <person name="Boname J.M."/>
            <person name="Field S."/>
            <person name="Nejentsev S."/>
            <person name="Salio M."/>
            <person name="Cerundolo V."/>
            <person name="Wills M."/>
            <person name="Lehner P.J."/>
        </authorList>
    </citation>
    <scope>FUNCTION</scope>
    <scope>MUTAGENESIS OF ILE-17 AND TRP-47</scope>
</reference>
<reference key="12">
    <citation type="journal article" date="2011" name="PLoS Pathog.">
        <title>The MARCH family E3 ubiquitin ligase K5 alters monocyte metabolism and proliferation through receptor tyrosine kinase modulation.</title>
        <authorList>
            <person name="Karki R."/>
            <person name="Lang S.M."/>
            <person name="Means R.E."/>
        </authorList>
    </citation>
    <scope>FUNCTION</scope>
    <scope>MUTAGENESIS OF TRP-47</scope>
</reference>
<reference key="13">
    <citation type="journal article" date="2013" name="PLoS ONE">
        <title>Kaposi's sarcoma-associated herpesvirus K3 and K5 proteins down regulate both DC-SIGN and DC-SIGNR.</title>
        <authorList>
            <person name="Lang S.M."/>
            <person name="Bynoe M.O."/>
            <person name="Karki R."/>
            <person name="Tartell M.A."/>
            <person name="Means R.E."/>
        </authorList>
    </citation>
    <scope>FUNCTION</scope>
    <scope>MUTAGENESIS OF TRP-47 AND TYR-156</scope>
</reference>
<reference key="14">
    <citation type="journal article" date="2014" name="J. Virol.">
        <title>Kaposi's sarcoma-associated herpesvirus K3 and K5 ubiquitin E3 ligases have stage-specific immune evasion roles during lytic replication.</title>
        <authorList>
            <person name="Brulois K."/>
            <person name="Toth Z."/>
            <person name="Wong L.Y."/>
            <person name="Feng P."/>
            <person name="Gao S.J."/>
            <person name="Ensser A."/>
            <person name="Jung J.U."/>
        </authorList>
    </citation>
    <scope>FUNCTION</scope>
</reference>
<evidence type="ECO:0000255" key="1"/>
<evidence type="ECO:0000255" key="2">
    <source>
        <dbReference type="PROSITE-ProRule" id="PRU00623"/>
    </source>
</evidence>
<evidence type="ECO:0000256" key="3">
    <source>
        <dbReference type="SAM" id="MobiDB-lite"/>
    </source>
</evidence>
<evidence type="ECO:0000269" key="4">
    <source>
    </source>
</evidence>
<evidence type="ECO:0000269" key="5">
    <source>
    </source>
</evidence>
<evidence type="ECO:0000269" key="6">
    <source>
    </source>
</evidence>
<evidence type="ECO:0000269" key="7">
    <source>
    </source>
</evidence>
<evidence type="ECO:0000269" key="8">
    <source>
    </source>
</evidence>
<evidence type="ECO:0000269" key="9">
    <source>
    </source>
</evidence>
<evidence type="ECO:0000269" key="10">
    <source>
    </source>
</evidence>
<evidence type="ECO:0000269" key="11">
    <source>
    </source>
</evidence>
<evidence type="ECO:0000269" key="12">
    <source>
    </source>
</evidence>
<evidence type="ECO:0000305" key="13"/>
<comment type="function">
    <text evidence="5 6 7 8 9 10">Membrane-bound E3 ubiquitin ligase expressed at the immediate early stage of viral reactivation to mediate polyubiquitination of various host membrane proteins related to the immune response (PubMed:10799607, PubMed:10859362, PubMed:11413168, PubMed:24899205). Promotes ubiquitination and subsequent degradation of host MHC-I, CD86, DC-SIGN and DC-SIGNR, ICAM1 and CD1D molecules, presumably to prevent lysis of infected cells by cytotoxic T-lymphocytes and NK cell (PubMed:11413168, PubMed:23460925). Plays a role in the down-regulation of the host stress-induced NKG2D ligands MICA, MICB and CLEC2B, which enable immune cells expressing the NKG2D receptor to recognize and annihilate infected cells prior to viral spread (PubMed:18230726). Alters monocyte metabolism and proliferation by mediating rapid internalization of cellular growth factor-binding receptor tyrosine kinases from the surface leading to increased signaling (PubMed:21490960).</text>
</comment>
<comment type="catalytic activity">
    <reaction>
        <text>S-ubiquitinyl-[E2 ubiquitin-conjugating enzyme]-L-cysteine + [acceptor protein]-L-lysine = [E2 ubiquitin-conjugating enzyme]-L-cysteine + N(6)-ubiquitinyl-[acceptor protein]-L-lysine.</text>
        <dbReference type="EC" id="2.3.2.27"/>
    </reaction>
</comment>
<comment type="pathway">
    <text>Protein modification; protein ubiquitination.</text>
</comment>
<comment type="subunit">
    <text evidence="13">Binds human MHC-I, CD86, ICAM1 and CD1D.</text>
</comment>
<comment type="interaction">
    <interactant intactId="EBI-6150009">
        <id>P90489</id>
    </interactant>
    <interactant intactId="EBI-7921836">
        <id>P88904</id>
    </interactant>
    <organismsDiffer>true</organismsDiffer>
    <experiments>2</experiments>
</comment>
<comment type="interaction">
    <interactant intactId="EBI-6150009">
        <id>P90489</id>
    </interactant>
    <interactant intactId="EBI-7921977">
        <id>P88910</id>
    </interactant>
    <organismsDiffer>true</organismsDiffer>
    <experiments>2</experiments>
</comment>
<comment type="interaction">
    <interactant intactId="EBI-6150009">
        <id>P90489</id>
    </interactant>
    <interactant intactId="EBI-7922027">
        <id>P88918</id>
    </interactant>
    <organismsDiffer>true</organismsDiffer>
    <experiments>2</experiments>
</comment>
<comment type="interaction">
    <interactant intactId="EBI-6150009">
        <id>P90489</id>
    </interactant>
    <interactant intactId="EBI-7922689">
        <id>P88941</id>
    </interactant>
    <organismsDiffer>true</organismsDiffer>
    <experiments>2</experiments>
</comment>
<comment type="subcellular location">
    <subcellularLocation>
        <location evidence="4">Host cell membrane</location>
        <topology evidence="4">Multi-pass membrane protein</topology>
    </subcellularLocation>
    <subcellularLocation>
        <location evidence="4">Host endoplasmic reticulum</location>
    </subcellularLocation>
    <text>Probably exerts its effects at the plasma membrane during viral infection.</text>
</comment>
<accession>P90489</accession>
<accession>D0UZM4</accession>
<accession>Q2HRC0</accession>
<protein>
    <recommendedName>
        <fullName>E3 ubiquitin-protein ligase MIR2</fullName>
        <ecNumber>2.3.2.27</ecNumber>
    </recommendedName>
    <alternativeName>
        <fullName>IE1A protein</fullName>
    </alternativeName>
    <alternativeName>
        <fullName>Modulator of immune recognition 2</fullName>
    </alternativeName>
    <alternativeName>
        <fullName>ORF K5</fullName>
    </alternativeName>
    <alternativeName>
        <fullName evidence="13">RING-type E3 ubiquitin transferase MIR2</fullName>
    </alternativeName>
</protein>
<dbReference type="EC" id="2.3.2.27"/>
<dbReference type="EMBL" id="U83349">
    <property type="protein sequence ID" value="AAC56949.1"/>
    <property type="molecule type" value="Genomic_DNA"/>
</dbReference>
<dbReference type="EMBL" id="U75698">
    <property type="protein sequence ID" value="AAC57094.1"/>
    <property type="molecule type" value="Genomic_DNA"/>
</dbReference>
<dbReference type="EMBL" id="U71366">
    <property type="protein sequence ID" value="AAC34942.1"/>
    <property type="molecule type" value="Genomic_DNA"/>
</dbReference>
<dbReference type="EMBL" id="AF117253">
    <property type="protein sequence ID" value="AAF23881.1"/>
    <property type="molecule type" value="mRNA"/>
</dbReference>
<dbReference type="EMBL" id="U93872">
    <property type="protein sequence ID" value="AAB62655.1"/>
    <property type="molecule type" value="Genomic_DNA"/>
</dbReference>
<dbReference type="EMBL" id="AF148805">
    <property type="protein sequence ID" value="ABD28863.1"/>
    <property type="molecule type" value="Genomic_DNA"/>
</dbReference>
<dbReference type="RefSeq" id="YP_001129365.1">
    <property type="nucleotide sequence ID" value="NC_009333.1"/>
</dbReference>
<dbReference type="SMR" id="P90489"/>
<dbReference type="BioGRID" id="1776945">
    <property type="interactions" value="5"/>
</dbReference>
<dbReference type="IntAct" id="P90489">
    <property type="interactions" value="6"/>
</dbReference>
<dbReference type="MINT" id="P90489"/>
<dbReference type="TCDB" id="8.A.159.1.10">
    <property type="family name" value="the march ubiquitin ligase (march) family"/>
</dbReference>
<dbReference type="SwissPalm" id="P90489"/>
<dbReference type="GeneID" id="4961442"/>
<dbReference type="KEGG" id="vg:4961442"/>
<dbReference type="UniPathway" id="UPA00143"/>
<dbReference type="Proteomes" id="UP000000942">
    <property type="component" value="Segment"/>
</dbReference>
<dbReference type="GO" id="GO:0044165">
    <property type="term" value="C:host cell endoplasmic reticulum"/>
    <property type="evidence" value="ECO:0007669"/>
    <property type="project" value="UniProtKB-SubCell"/>
</dbReference>
<dbReference type="GO" id="GO:0020002">
    <property type="term" value="C:host cell plasma membrane"/>
    <property type="evidence" value="ECO:0007669"/>
    <property type="project" value="UniProtKB-SubCell"/>
</dbReference>
<dbReference type="GO" id="GO:0016020">
    <property type="term" value="C:membrane"/>
    <property type="evidence" value="ECO:0007669"/>
    <property type="project" value="UniProtKB-KW"/>
</dbReference>
<dbReference type="GO" id="GO:0016740">
    <property type="term" value="F:transferase activity"/>
    <property type="evidence" value="ECO:0007669"/>
    <property type="project" value="UniProtKB-KW"/>
</dbReference>
<dbReference type="GO" id="GO:0008270">
    <property type="term" value="F:zinc ion binding"/>
    <property type="evidence" value="ECO:0007669"/>
    <property type="project" value="UniProtKB-KW"/>
</dbReference>
<dbReference type="GO" id="GO:0075509">
    <property type="term" value="P:endocytosis involved in viral entry into host cell"/>
    <property type="evidence" value="ECO:0000315"/>
    <property type="project" value="CACAO"/>
</dbReference>
<dbReference type="GO" id="GO:0016567">
    <property type="term" value="P:protein ubiquitination"/>
    <property type="evidence" value="ECO:0007669"/>
    <property type="project" value="UniProtKB-UniPathway"/>
</dbReference>
<dbReference type="GO" id="GO:0039648">
    <property type="term" value="P:symbiont-mediated perturbation of host ubiquitin-like protein modification"/>
    <property type="evidence" value="ECO:0000315"/>
    <property type="project" value="CACAO"/>
</dbReference>
<dbReference type="GO" id="GO:0039504">
    <property type="term" value="P:symbiont-mediated suppression of host adaptive immune response"/>
    <property type="evidence" value="ECO:0000315"/>
    <property type="project" value="CACAO"/>
</dbReference>
<dbReference type="GO" id="GO:0052170">
    <property type="term" value="P:symbiont-mediated suppression of host innate immune response"/>
    <property type="evidence" value="ECO:0007669"/>
    <property type="project" value="UniProtKB-KW"/>
</dbReference>
<dbReference type="GO" id="GO:0039502">
    <property type="term" value="P:symbiont-mediated suppression of host type I interferon-mediated signaling pathway"/>
    <property type="evidence" value="ECO:0007669"/>
    <property type="project" value="UniProtKB-KW"/>
</dbReference>
<dbReference type="GO" id="GO:0006511">
    <property type="term" value="P:ubiquitin-dependent protein catabolic process"/>
    <property type="evidence" value="ECO:0000314"/>
    <property type="project" value="CACAO"/>
</dbReference>
<dbReference type="CDD" id="cd16495">
    <property type="entry name" value="RING_CH-C4HC3_MARCH"/>
    <property type="match status" value="1"/>
</dbReference>
<dbReference type="FunFam" id="3.30.40.10:FF:000990">
    <property type="entry name" value="E3 ubiquitin-protein ligase MIR1"/>
    <property type="match status" value="1"/>
</dbReference>
<dbReference type="Gene3D" id="3.30.40.10">
    <property type="entry name" value="Zinc/RING finger domain, C3HC4 (zinc finger)"/>
    <property type="match status" value="1"/>
</dbReference>
<dbReference type="InterPro" id="IPR001841">
    <property type="entry name" value="Znf_RING"/>
</dbReference>
<dbReference type="InterPro" id="IPR011016">
    <property type="entry name" value="Znf_RING-CH"/>
</dbReference>
<dbReference type="InterPro" id="IPR013083">
    <property type="entry name" value="Znf_RING/FYVE/PHD"/>
</dbReference>
<dbReference type="PANTHER" id="PTHR46065">
    <property type="entry name" value="E3 UBIQUITIN-PROTEIN LIGASE MARCH 2/3 FAMILY MEMBER"/>
    <property type="match status" value="1"/>
</dbReference>
<dbReference type="PANTHER" id="PTHR46065:SF3">
    <property type="entry name" value="FI20425P1"/>
    <property type="match status" value="1"/>
</dbReference>
<dbReference type="Pfam" id="PF12906">
    <property type="entry name" value="RINGv"/>
    <property type="match status" value="1"/>
</dbReference>
<dbReference type="SMART" id="SM00744">
    <property type="entry name" value="RINGv"/>
    <property type="match status" value="1"/>
</dbReference>
<dbReference type="SUPFAM" id="SSF57850">
    <property type="entry name" value="RING/U-box"/>
    <property type="match status" value="1"/>
</dbReference>
<dbReference type="PROSITE" id="PS51292">
    <property type="entry name" value="ZF_RING_CH"/>
    <property type="match status" value="1"/>
</dbReference>
<name>MIR2_HHV8P</name>
<proteinExistence type="evidence at protein level"/>
<sequence length="256" mass="27939">MASKDVEEGVEGPICWICREEVGNEGIHPCACTGELDVVHPQCLSTWLTVSRNTACQMCRVIYRTRTQWRSRLNLWPEMERQEIFELFLLMSVVVAGLVGVALCTWTLLVILTAPAGTFSPGAVLGFLCFFGFYQIFIVFAFGGICRVSGTVRALYAANNTRVTVLPYRRPRRPTANEDNIELTVLVGPAGGTDEEPTDESSEGDVASGDKERDGSSGDEPDGGPNDRAGLRGTARTDLCAPTKKPVRKNHPKNNG</sequence>
<feature type="chain" id="PRO_0000221390" description="E3 ubiquitin-protein ligase MIR2">
    <location>
        <begin position="1"/>
        <end position="256"/>
    </location>
</feature>
<feature type="topological domain" description="Cytoplasmic" evidence="1">
    <location>
        <begin position="1"/>
        <end position="83"/>
    </location>
</feature>
<feature type="transmembrane region" description="Helical" evidence="1">
    <location>
        <begin position="84"/>
        <end position="104"/>
    </location>
</feature>
<feature type="topological domain" description="Extracellular" evidence="1">
    <location>
        <begin position="105"/>
        <end position="124"/>
    </location>
</feature>
<feature type="transmembrane region" description="Helical" evidence="1">
    <location>
        <begin position="125"/>
        <end position="145"/>
    </location>
</feature>
<feature type="topological domain" description="Cytoplasmic" evidence="1">
    <location>
        <begin position="146"/>
        <end position="256"/>
    </location>
</feature>
<feature type="zinc finger region" description="RING-CH-type" evidence="2">
    <location>
        <begin position="7"/>
        <end position="66"/>
    </location>
</feature>
<feature type="region of interest" description="Disordered" evidence="3">
    <location>
        <begin position="179"/>
        <end position="256"/>
    </location>
</feature>
<feature type="compositionally biased region" description="Acidic residues" evidence="3">
    <location>
        <begin position="193"/>
        <end position="203"/>
    </location>
</feature>
<feature type="compositionally biased region" description="Basic residues" evidence="3">
    <location>
        <begin position="245"/>
        <end position="256"/>
    </location>
</feature>
<feature type="binding site" evidence="2">
    <location>
        <position position="15"/>
    </location>
    <ligand>
        <name>Zn(2+)</name>
        <dbReference type="ChEBI" id="CHEBI:29105"/>
        <label>1</label>
    </ligand>
</feature>
<feature type="binding site" evidence="2">
    <location>
        <position position="18"/>
    </location>
    <ligand>
        <name>Zn(2+)</name>
        <dbReference type="ChEBI" id="CHEBI:29105"/>
        <label>1</label>
    </ligand>
</feature>
<feature type="binding site" evidence="2">
    <location>
        <position position="30"/>
    </location>
    <ligand>
        <name>Zn(2+)</name>
        <dbReference type="ChEBI" id="CHEBI:29105"/>
        <label>2</label>
    </ligand>
</feature>
<feature type="binding site" evidence="2">
    <location>
        <position position="32"/>
    </location>
    <ligand>
        <name>Zn(2+)</name>
        <dbReference type="ChEBI" id="CHEBI:29105"/>
        <label>2</label>
    </ligand>
</feature>
<feature type="binding site" evidence="2">
    <location>
        <position position="40"/>
    </location>
    <ligand>
        <name>Zn(2+)</name>
        <dbReference type="ChEBI" id="CHEBI:29105"/>
        <label>1</label>
    </ligand>
</feature>
<feature type="binding site" evidence="2">
    <location>
        <position position="43"/>
    </location>
    <ligand>
        <name>Zn(2+)</name>
        <dbReference type="ChEBI" id="CHEBI:29105"/>
        <label>1</label>
    </ligand>
</feature>
<feature type="binding site" evidence="2">
    <location>
        <position position="56"/>
    </location>
    <ligand>
        <name>Zn(2+)</name>
        <dbReference type="ChEBI" id="CHEBI:29105"/>
        <label>2</label>
    </ligand>
</feature>
<feature type="binding site" evidence="2">
    <location>
        <position position="59"/>
    </location>
    <ligand>
        <name>Zn(2+)</name>
        <dbReference type="ChEBI" id="CHEBI:29105"/>
        <label>2</label>
    </ligand>
</feature>
<feature type="mutagenesis site" description="Loss of B7-2 and ICAM-1 surface expression reduction; when associated with S56 and S-59." evidence="5">
    <original>C</original>
    <variation>S</variation>
    <location>
        <position position="15"/>
    </location>
</feature>
<feature type="mutagenesis site" description="Unable to down-regulate cell surface MICA and AICL; when associated with A-47." evidence="10">
    <original>I</original>
    <variation>A</variation>
    <location>
        <position position="17"/>
    </location>
</feature>
<feature type="mutagenesis site" description="Complete loss of host receptor tyrosine kinases (RTKs) internalization and E3 ubiquitin ligase activity." evidence="11 12">
    <original>W</original>
    <variation>A</variation>
    <location>
        <position position="47"/>
    </location>
</feature>
<feature type="mutagenesis site" description="Unable to down-regulate cell surface MICA and AICL; when associated with A-17." evidence="10">
    <original>W</original>
    <variation>A</variation>
    <location>
        <position position="47"/>
    </location>
</feature>
<feature type="mutagenesis site" description="Loss of ubiquitination; when associated with S-59. Loss of B7-2 and ICAM-1 surface expression reduction; when associated with S-15 and S-59." evidence="5">
    <original>C</original>
    <variation>S</variation>
    <location>
        <position position="56"/>
    </location>
</feature>
<feature type="mutagenesis site" description="Loss of ubiquitination; when associated with S-56. Loss of B7-2 and ICAM-1 surface expression reduction; when associated with S-15 and S-56." evidence="5">
    <original>C</original>
    <variation>S</variation>
    <location>
        <position position="59"/>
    </location>
</feature>
<feature type="mutagenesis site" description="Reduced cell surface modulation of both DC-SIGN and DC-SIGNR." evidence="12">
    <original>Y</original>
    <variation>A</variation>
    <location>
        <position position="156"/>
    </location>
</feature>
<gene>
    <name type="primary">K5</name>
</gene>
<organism>
    <name type="scientific">Human herpesvirus 8 type P (isolate GK18)</name>
    <name type="common">HHV-8</name>
    <name type="synonym">Kaposi's sarcoma-associated herpesvirus</name>
    <dbReference type="NCBI Taxonomy" id="868565"/>
    <lineage>
        <taxon>Viruses</taxon>
        <taxon>Duplodnaviria</taxon>
        <taxon>Heunggongvirae</taxon>
        <taxon>Peploviricota</taxon>
        <taxon>Herviviricetes</taxon>
        <taxon>Herpesvirales</taxon>
        <taxon>Orthoherpesviridae</taxon>
        <taxon>Gammaherpesvirinae</taxon>
        <taxon>Rhadinovirus</taxon>
        <taxon>Rhadinovirus humangamma8</taxon>
        <taxon>Human herpesvirus 8</taxon>
    </lineage>
</organism>